<reference key="1">
    <citation type="journal article" date="2004" name="Proc. Natl. Acad. Sci. U.S.A.">
        <title>The diploid genome sequence of Candida albicans.</title>
        <authorList>
            <person name="Jones T."/>
            <person name="Federspiel N.A."/>
            <person name="Chibana H."/>
            <person name="Dungan J."/>
            <person name="Kalman S."/>
            <person name="Magee B.B."/>
            <person name="Newport G."/>
            <person name="Thorstenson Y.R."/>
            <person name="Agabian N."/>
            <person name="Magee P.T."/>
            <person name="Davis R.W."/>
            <person name="Scherer S."/>
        </authorList>
    </citation>
    <scope>NUCLEOTIDE SEQUENCE [LARGE SCALE GENOMIC DNA]</scope>
    <source>
        <strain>SC5314 / ATCC MYA-2876</strain>
    </source>
</reference>
<reference key="2">
    <citation type="journal article" date="2007" name="Genome Biol.">
        <title>Assembly of the Candida albicans genome into sixteen supercontigs aligned on the eight chromosomes.</title>
        <authorList>
            <person name="van het Hoog M."/>
            <person name="Rast T.J."/>
            <person name="Martchenko M."/>
            <person name="Grindle S."/>
            <person name="Dignard D."/>
            <person name="Hogues H."/>
            <person name="Cuomo C."/>
            <person name="Berriman M."/>
            <person name="Scherer S."/>
            <person name="Magee B.B."/>
            <person name="Whiteway M."/>
            <person name="Chibana H."/>
            <person name="Nantel A."/>
            <person name="Magee P.T."/>
        </authorList>
    </citation>
    <scope>GENOME REANNOTATION</scope>
    <source>
        <strain>SC5314 / ATCC MYA-2876</strain>
    </source>
</reference>
<reference key="3">
    <citation type="journal article" date="2013" name="Genome Biol.">
        <title>Assembly of a phased diploid Candida albicans genome facilitates allele-specific measurements and provides a simple model for repeat and indel structure.</title>
        <authorList>
            <person name="Muzzey D."/>
            <person name="Schwartz K."/>
            <person name="Weissman J.S."/>
            <person name="Sherlock G."/>
        </authorList>
    </citation>
    <scope>NUCLEOTIDE SEQUENCE [LARGE SCALE GENOMIC DNA]</scope>
    <scope>GENOME REANNOTATION</scope>
    <source>
        <strain>SC5314 / ATCC MYA-2876</strain>
    </source>
</reference>
<name>ARO1_CANAL</name>
<organism>
    <name type="scientific">Candida albicans (strain SC5314 / ATCC MYA-2876)</name>
    <name type="common">Yeast</name>
    <dbReference type="NCBI Taxonomy" id="237561"/>
    <lineage>
        <taxon>Eukaryota</taxon>
        <taxon>Fungi</taxon>
        <taxon>Dikarya</taxon>
        <taxon>Ascomycota</taxon>
        <taxon>Saccharomycotina</taxon>
        <taxon>Pichiomycetes</taxon>
        <taxon>Debaryomycetaceae</taxon>
        <taxon>Candida/Lodderomyces clade</taxon>
        <taxon>Candida</taxon>
    </lineage>
</organism>
<sequence length="1551" mass="169396">MSIEKVPILGKETIHVGYGIADHIVREVIANLASSTYVIVTDTNMARTPQYSKLTDDFKTNLSEKRPESRLLTYCVSPGENNKNRATKAAVEDFLLQQGCTRDTVILAVGGGVIGDMIGFVAATFMRGVRVVQVPTTLLAMVDSSVGGKTAIDTPLGKNFIGAFHQPEYVFCDVSFLETLPARQFINGMAEVVKTAAIWNEEEFTRLENFSKKFLSVVTSKKPDLQSIKAELVKTVLESVRVKAGVVSSDEKEAGLRNLLNFGHTIGHAIEAVLTPEALHGECVSIGMIKEAELSRYLGILPPVAVARLSKCLVAYGLPVSIDDKEFLKKVGPKRHYVEIDILLKKMAIDKKNDGSKIRCVLLEKIGKCYQLKAHQVSKQDLSFVLTDEVLVHPFTNPPKENIIVPPGSKSISNRALILAALGNGTVRVKNLLHSDDTKHMLDAVASLKGAEISTEDNGETIVVKGNGGNLVTSGEELYLGNAGTASRFLTTVASLVGKSQASDDVILTGNARMQERPIGPLVDALGSNGSEIEYLNKQGSLPLKISAGNGLKGGRIELAATISSQYVSSILMCAPYAKEPVTLALVGGKPISQLYIDMTCAMMKSFGIEVTKSTTEEYTYHIPKGTYKNPSEYVIESDASSATYPLAFAAMTGTSCTIPNIGSSSLQGDAKFAVDVLKPMGCKVEQTTTSTTVTGPPRGHLKPLPHVDMEPMTDAFLTASVVAAVAKGGSSTSITGIANQRVKECNRIEAMVTELAKFGVPANELPDGIEIHGIDIEDLKTPEISKRGVSSYDDHRVAMSFSLLAGLCKEPVLILERSTTGKTWPGWWDILHSKFKIELDGYEPPFNTDKHVDKSSDKSIIVIGMRGTGKSTLSEWLASFLGFKMLDMDKYLEEKLGTGIKSLIKAKGWEYFRQEEAIVAKECFTKFSKGYVLSTGGGIVEGEDARQQLKSYADNGGIVLHLHRDLDETVTFLAADTTRPAYSSEVQEVWLRREKWYHECSNYHFYSSHCSTEDEFNHLRRSFVNYIKLITGAERPVVPAGRSAAVVLTSPDLNEVVGDLESITIGADAVELRVDLFKDTSAEFVAAQIAVIRKHADLPIIYTVRTVSQGGKFPDENVDELKSLLLLGIRLGVAYVDLQLTAPNELIEEISSKKGFTRVIGTYQDINGELKWNNVEWKNKYNQGVSMNADIVRLVGKANSIQDNLDLENFKKQNTLKPLIAFNLGSQGKLSQVLNGTFTPISHKLLPNDEEFLTIGELNQTYFDIGGFTAKKFWVIGSPIEHSRSPNLHNAGYKALNLPYQFGRFEATDVDVVYDNLINKPDFGGLAITMPLKLDIMKFATKLSDAAETIGAVNTLIPIEGGYFGDNTDWVGISNSFIRAGVPPKSSSNGLVVGAGGTSRAAIYALHQMGCAKIYLVNRTAAKLEELVKSFPKDYNLEIVETEQQADKASKVSLAVSCIPADKPLDGEVLKKIERILSNGSEQSAGFKPTLLEASYKPRVTPIMKLTEEQYKWKVIPGVEMLVNQGDRQFKLHTGFTAPYEIIHRAVVEE</sequence>
<proteinExistence type="evidence at protein level"/>
<feature type="chain" id="PRO_0000406709" description="Pentafunctional AROM polypeptide">
    <location>
        <begin position="1"/>
        <end position="1551"/>
    </location>
</feature>
<feature type="region of interest" description="3-dehydroquinate synthase">
    <location>
        <begin position="1"/>
        <end position="379"/>
    </location>
</feature>
<feature type="region of interest" description="EPSP synthase">
    <location>
        <begin position="392"/>
        <end position="838"/>
    </location>
</feature>
<feature type="region of interest" description="Shikimate kinase">
    <location>
        <begin position="858"/>
        <end position="1048"/>
    </location>
</feature>
<feature type="region of interest" description="3-dehydroquinase">
    <location>
        <begin position="1049"/>
        <end position="1258"/>
    </location>
</feature>
<feature type="region of interest" description="Shikimate dehydrogenase">
    <location>
        <begin position="1271"/>
        <end position="1551"/>
    </location>
</feature>
<feature type="active site" description="Proton acceptor; for 3-dehydroquinate synthase activity" evidence="1">
    <location>
        <position position="253"/>
    </location>
</feature>
<feature type="active site" description="Proton acceptor; for 3-dehydroquinate synthase activity" evidence="1">
    <location>
        <position position="268"/>
    </location>
</feature>
<feature type="active site" description="Schiff-base intermediate with substrate; for 3-dehydroquinate dehydratase activity" evidence="1">
    <location>
        <position position="1194"/>
    </location>
</feature>
<feature type="binding site" evidence="1">
    <location>
        <begin position="42"/>
        <end position="44"/>
    </location>
    <ligand>
        <name>NAD(+)</name>
        <dbReference type="ChEBI" id="CHEBI:57540"/>
    </ligand>
</feature>
<feature type="binding site" evidence="1">
    <location>
        <begin position="80"/>
        <end position="83"/>
    </location>
    <ligand>
        <name>NAD(+)</name>
        <dbReference type="ChEBI" id="CHEBI:57540"/>
    </ligand>
</feature>
<feature type="binding site" evidence="1">
    <location>
        <begin position="111"/>
        <end position="113"/>
    </location>
    <ligand>
        <name>NAD(+)</name>
        <dbReference type="ChEBI" id="CHEBI:57540"/>
    </ligand>
</feature>
<feature type="binding site" evidence="1">
    <location>
        <position position="116"/>
    </location>
    <ligand>
        <name>NAD(+)</name>
        <dbReference type="ChEBI" id="CHEBI:57540"/>
    </ligand>
</feature>
<feature type="binding site" evidence="1">
    <location>
        <position position="127"/>
    </location>
    <ligand>
        <name>7-phospho-2-dehydro-3-deoxy-D-arabino-heptonate</name>
        <dbReference type="ChEBI" id="CHEBI:58394"/>
    </ligand>
</feature>
<feature type="binding site" evidence="1">
    <location>
        <begin position="136"/>
        <end position="137"/>
    </location>
    <ligand>
        <name>NAD(+)</name>
        <dbReference type="ChEBI" id="CHEBI:57540"/>
    </ligand>
</feature>
<feature type="binding site" evidence="1">
    <location>
        <position position="143"/>
    </location>
    <ligand>
        <name>7-phospho-2-dehydro-3-deoxy-D-arabino-heptonate</name>
        <dbReference type="ChEBI" id="CHEBI:58394"/>
    </ligand>
</feature>
<feature type="binding site" evidence="1">
    <location>
        <position position="149"/>
    </location>
    <ligand>
        <name>7-phospho-2-dehydro-3-deoxy-D-arabino-heptonate</name>
        <dbReference type="ChEBI" id="CHEBI:58394"/>
    </ligand>
</feature>
<feature type="binding site" evidence="1">
    <location>
        <position position="158"/>
    </location>
    <ligand>
        <name>NAD(+)</name>
        <dbReference type="ChEBI" id="CHEBI:57540"/>
    </ligand>
</feature>
<feature type="binding site" evidence="1">
    <location>
        <position position="159"/>
    </location>
    <ligand>
        <name>7-phospho-2-dehydro-3-deoxy-D-arabino-heptonate</name>
        <dbReference type="ChEBI" id="CHEBI:58394"/>
    </ligand>
</feature>
<feature type="binding site" evidence="1">
    <location>
        <begin position="176"/>
        <end position="179"/>
    </location>
    <ligand>
        <name>NAD(+)</name>
        <dbReference type="ChEBI" id="CHEBI:57540"/>
    </ligand>
</feature>
<feature type="binding site" evidence="1">
    <location>
        <position position="187"/>
    </location>
    <ligand>
        <name>NAD(+)</name>
        <dbReference type="ChEBI" id="CHEBI:57540"/>
    </ligand>
</feature>
<feature type="binding site" evidence="1">
    <location>
        <begin position="191"/>
        <end position="194"/>
    </location>
    <ligand>
        <name>7-phospho-2-dehydro-3-deoxy-D-arabino-heptonate</name>
        <dbReference type="ChEBI" id="CHEBI:58394"/>
    </ligand>
</feature>
<feature type="binding site" evidence="1">
    <location>
        <position position="191"/>
    </location>
    <ligand>
        <name>Zn(2+)</name>
        <dbReference type="ChEBI" id="CHEBI:29105"/>
        <note>catalytic</note>
    </ligand>
</feature>
<feature type="binding site" evidence="1">
    <location>
        <position position="243"/>
    </location>
    <ligand>
        <name>7-phospho-2-dehydro-3-deoxy-D-arabino-heptonate</name>
        <dbReference type="ChEBI" id="CHEBI:58394"/>
    </ligand>
</feature>
<feature type="binding site" evidence="1">
    <location>
        <begin position="257"/>
        <end position="261"/>
    </location>
    <ligand>
        <name>7-phospho-2-dehydro-3-deoxy-D-arabino-heptonate</name>
        <dbReference type="ChEBI" id="CHEBI:58394"/>
    </ligand>
</feature>
<feature type="binding site" evidence="1">
    <location>
        <position position="264"/>
    </location>
    <ligand>
        <name>7-phospho-2-dehydro-3-deoxy-D-arabino-heptonate</name>
        <dbReference type="ChEBI" id="CHEBI:58394"/>
    </ligand>
</feature>
<feature type="binding site" evidence="1">
    <location>
        <position position="264"/>
    </location>
    <ligand>
        <name>Zn(2+)</name>
        <dbReference type="ChEBI" id="CHEBI:29105"/>
        <note>catalytic</note>
    </ligand>
</feature>
<feature type="binding site" evidence="1">
    <location>
        <position position="280"/>
    </location>
    <ligand>
        <name>7-phospho-2-dehydro-3-deoxy-D-arabino-heptonate</name>
        <dbReference type="ChEBI" id="CHEBI:58394"/>
    </ligand>
</feature>
<feature type="binding site" evidence="1">
    <location>
        <position position="280"/>
    </location>
    <ligand>
        <name>Zn(2+)</name>
        <dbReference type="ChEBI" id="CHEBI:29105"/>
        <note>catalytic</note>
    </ligand>
</feature>
<feature type="binding site" evidence="1">
    <location>
        <position position="351"/>
    </location>
    <ligand>
        <name>7-phospho-2-dehydro-3-deoxy-D-arabino-heptonate</name>
        <dbReference type="ChEBI" id="CHEBI:58394"/>
    </ligand>
</feature>
<feature type="binding site" evidence="1">
    <location>
        <begin position="865"/>
        <end position="872"/>
    </location>
    <ligand>
        <name>ATP</name>
        <dbReference type="ChEBI" id="CHEBI:30616"/>
    </ligand>
</feature>
<feature type="strand" evidence="2">
    <location>
        <begin position="4"/>
        <end position="8"/>
    </location>
</feature>
<feature type="strand" evidence="2">
    <location>
        <begin position="11"/>
        <end position="19"/>
    </location>
</feature>
<feature type="helix" evidence="2">
    <location>
        <begin position="21"/>
        <end position="31"/>
    </location>
</feature>
<feature type="strand" evidence="2">
    <location>
        <begin position="35"/>
        <end position="42"/>
    </location>
</feature>
<feature type="helix" evidence="2">
    <location>
        <begin position="43"/>
        <end position="46"/>
    </location>
</feature>
<feature type="helix" evidence="2">
    <location>
        <begin position="49"/>
        <end position="65"/>
    </location>
</feature>
<feature type="strand" evidence="2">
    <location>
        <begin position="70"/>
        <end position="76"/>
    </location>
</feature>
<feature type="helix" evidence="2">
    <location>
        <begin position="80"/>
        <end position="82"/>
    </location>
</feature>
<feature type="helix" evidence="2">
    <location>
        <begin position="85"/>
        <end position="97"/>
    </location>
</feature>
<feature type="strand" evidence="2">
    <location>
        <begin position="105"/>
        <end position="111"/>
    </location>
</feature>
<feature type="helix" evidence="2">
    <location>
        <begin position="112"/>
        <end position="124"/>
    </location>
</feature>
<feature type="strand" evidence="2">
    <location>
        <begin position="130"/>
        <end position="135"/>
    </location>
</feature>
<feature type="helix" evidence="2">
    <location>
        <begin position="138"/>
        <end position="142"/>
    </location>
</feature>
<feature type="turn" evidence="2">
    <location>
        <begin position="143"/>
        <end position="145"/>
    </location>
</feature>
<feature type="strand" evidence="2">
    <location>
        <begin position="149"/>
        <end position="154"/>
    </location>
</feature>
<feature type="strand" evidence="2">
    <location>
        <begin position="157"/>
        <end position="164"/>
    </location>
</feature>
<feature type="strand" evidence="2">
    <location>
        <begin position="168"/>
        <end position="173"/>
    </location>
</feature>
<feature type="helix" evidence="2">
    <location>
        <begin position="174"/>
        <end position="179"/>
    </location>
</feature>
<feature type="helix" evidence="2">
    <location>
        <begin position="182"/>
        <end position="199"/>
    </location>
</feature>
<feature type="helix" evidence="2">
    <location>
        <begin position="201"/>
        <end position="218"/>
    </location>
</feature>
<feature type="strand" evidence="2">
    <location>
        <begin position="220"/>
        <end position="222"/>
    </location>
</feature>
<feature type="helix" evidence="2">
    <location>
        <begin position="225"/>
        <end position="228"/>
    </location>
</feature>
<feature type="helix" evidence="2">
    <location>
        <begin position="229"/>
        <end position="247"/>
    </location>
</feature>
<feature type="helix" evidence="2">
    <location>
        <begin position="256"/>
        <end position="259"/>
    </location>
</feature>
<feature type="turn" evidence="2">
    <location>
        <begin position="260"/>
        <end position="263"/>
    </location>
</feature>
<feature type="helix" evidence="2">
    <location>
        <begin position="264"/>
        <end position="274"/>
    </location>
</feature>
<feature type="turn" evidence="2">
    <location>
        <begin position="275"/>
        <end position="277"/>
    </location>
</feature>
<feature type="helix" evidence="2">
    <location>
        <begin position="280"/>
        <end position="297"/>
    </location>
</feature>
<feature type="helix" evidence="2">
    <location>
        <begin position="303"/>
        <end position="315"/>
    </location>
</feature>
<feature type="helix" evidence="2">
    <location>
        <begin position="325"/>
        <end position="331"/>
    </location>
</feature>
<feature type="helix" evidence="2">
    <location>
        <begin position="332"/>
        <end position="337"/>
    </location>
</feature>
<feature type="helix" evidence="2">
    <location>
        <begin position="340"/>
        <end position="350"/>
    </location>
</feature>
<feature type="strand" evidence="2">
    <location>
        <begin position="363"/>
        <end position="365"/>
    </location>
</feature>
<feature type="helix" evidence="2">
    <location>
        <begin position="370"/>
        <end position="372"/>
    </location>
</feature>
<feature type="helix" evidence="2">
    <location>
        <begin position="379"/>
        <end position="386"/>
    </location>
</feature>
<feature type="strand" evidence="3">
    <location>
        <begin position="390"/>
        <end position="392"/>
    </location>
</feature>
<feature type="strand" evidence="3">
    <location>
        <begin position="400"/>
        <end position="403"/>
    </location>
</feature>
<feature type="helix" evidence="3">
    <location>
        <begin position="410"/>
        <end position="422"/>
    </location>
</feature>
<feature type="strand" evidence="3">
    <location>
        <begin position="423"/>
        <end position="431"/>
    </location>
</feature>
<feature type="helix" evidence="3">
    <location>
        <begin position="436"/>
        <end position="447"/>
    </location>
</feature>
<feature type="strand" evidence="3">
    <location>
        <begin position="451"/>
        <end position="456"/>
    </location>
</feature>
<feature type="turn" evidence="3">
    <location>
        <begin position="457"/>
        <end position="460"/>
    </location>
</feature>
<feature type="strand" evidence="3">
    <location>
        <begin position="461"/>
        <end position="469"/>
    </location>
</feature>
<feature type="helix" evidence="3">
    <location>
        <begin position="484"/>
        <end position="494"/>
    </location>
</feature>
<feature type="strand" evidence="3">
    <location>
        <begin position="504"/>
        <end position="509"/>
    </location>
</feature>
<feature type="helix" evidence="3">
    <location>
        <begin position="514"/>
        <end position="516"/>
    </location>
</feature>
<feature type="helix" evidence="3">
    <location>
        <begin position="520"/>
        <end position="528"/>
    </location>
</feature>
<feature type="strand" evidence="3">
    <location>
        <begin position="533"/>
        <end position="538"/>
    </location>
</feature>
<feature type="strand" evidence="3">
    <location>
        <begin position="544"/>
        <end position="549"/>
    </location>
</feature>
<feature type="strand" evidence="3">
    <location>
        <begin position="554"/>
        <end position="560"/>
    </location>
</feature>
<feature type="helix" evidence="3">
    <location>
        <begin position="565"/>
        <end position="574"/>
    </location>
</feature>
<feature type="helix" evidence="3">
    <location>
        <begin position="575"/>
        <end position="577"/>
    </location>
</feature>
<feature type="strand" evidence="3">
    <location>
        <begin position="578"/>
        <end position="589"/>
    </location>
</feature>
<feature type="helix" evidence="3">
    <location>
        <begin position="594"/>
        <end position="606"/>
    </location>
</feature>
<feature type="strand" evidence="3">
    <location>
        <begin position="620"/>
        <end position="623"/>
    </location>
</feature>
<feature type="strand" evidence="3">
    <location>
        <begin position="632"/>
        <end position="635"/>
    </location>
</feature>
<feature type="helix" evidence="3">
    <location>
        <begin position="640"/>
        <end position="653"/>
    </location>
</feature>
<feature type="strand" evidence="3">
    <location>
        <begin position="656"/>
        <end position="659"/>
    </location>
</feature>
<feature type="helix" evidence="3">
    <location>
        <begin position="669"/>
        <end position="672"/>
    </location>
</feature>
<feature type="helix" evidence="3">
    <location>
        <begin position="673"/>
        <end position="676"/>
    </location>
</feature>
<feature type="turn" evidence="3">
    <location>
        <begin position="677"/>
        <end position="682"/>
    </location>
</feature>
<feature type="strand" evidence="3">
    <location>
        <begin position="684"/>
        <end position="687"/>
    </location>
</feature>
<feature type="strand" evidence="3">
    <location>
        <begin position="692"/>
        <end position="695"/>
    </location>
</feature>
<feature type="strand" evidence="3">
    <location>
        <begin position="706"/>
        <end position="709"/>
    </location>
</feature>
<feature type="helix" evidence="3">
    <location>
        <begin position="711"/>
        <end position="716"/>
    </location>
</feature>
<feature type="helix" evidence="3">
    <location>
        <begin position="717"/>
        <end position="724"/>
    </location>
</feature>
<feature type="strand" evidence="3">
    <location>
        <begin position="733"/>
        <end position="737"/>
    </location>
</feature>
<feature type="helix" evidence="3">
    <location>
        <begin position="739"/>
        <end position="743"/>
    </location>
</feature>
<feature type="strand" evidence="3">
    <location>
        <begin position="744"/>
        <end position="746"/>
    </location>
</feature>
<feature type="helix" evidence="3">
    <location>
        <begin position="748"/>
        <end position="758"/>
    </location>
</feature>
<feature type="strand" evidence="3">
    <location>
        <begin position="763"/>
        <end position="766"/>
    </location>
</feature>
<feature type="strand" evidence="3">
    <location>
        <begin position="769"/>
        <end position="772"/>
    </location>
</feature>
<feature type="turn" evidence="5">
    <location>
        <begin position="785"/>
        <end position="787"/>
    </location>
</feature>
<feature type="strand" evidence="3">
    <location>
        <begin position="789"/>
        <end position="791"/>
    </location>
</feature>
<feature type="helix" evidence="3">
    <location>
        <begin position="796"/>
        <end position="807"/>
    </location>
</feature>
<feature type="strand" evidence="3">
    <location>
        <begin position="809"/>
        <end position="811"/>
    </location>
</feature>
<feature type="strand" evidence="3">
    <location>
        <begin position="813"/>
        <end position="816"/>
    </location>
</feature>
<feature type="helix" evidence="5">
    <location>
        <begin position="818"/>
        <end position="821"/>
    </location>
</feature>
<feature type="turn" evidence="5">
    <location>
        <begin position="822"/>
        <end position="824"/>
    </location>
</feature>
<feature type="helix" evidence="3">
    <location>
        <begin position="827"/>
        <end position="834"/>
    </location>
</feature>
<feature type="strand" evidence="5">
    <location>
        <begin position="840"/>
        <end position="842"/>
    </location>
</feature>
<feature type="strand" evidence="4">
    <location>
        <begin position="861"/>
        <end position="865"/>
    </location>
</feature>
<feature type="helix" evidence="4">
    <location>
        <begin position="871"/>
        <end position="882"/>
    </location>
</feature>
<feature type="strand" evidence="4">
    <location>
        <begin position="885"/>
        <end position="888"/>
    </location>
</feature>
<feature type="helix" evidence="4">
    <location>
        <begin position="889"/>
        <end position="897"/>
    </location>
</feature>
<feature type="helix" evidence="4">
    <location>
        <begin position="901"/>
        <end position="908"/>
    </location>
</feature>
<feature type="helix" evidence="4">
    <location>
        <begin position="910"/>
        <end position="927"/>
    </location>
</feature>
<feature type="strand" evidence="4">
    <location>
        <begin position="930"/>
        <end position="935"/>
    </location>
</feature>
<feature type="helix" evidence="4">
    <location>
        <begin position="938"/>
        <end position="942"/>
    </location>
</feature>
<feature type="helix" evidence="4">
    <location>
        <begin position="944"/>
        <end position="955"/>
    </location>
</feature>
<feature type="strand" evidence="4">
    <location>
        <begin position="959"/>
        <end position="965"/>
    </location>
</feature>
<feature type="helix" evidence="4">
    <location>
        <begin position="986"/>
        <end position="1000"/>
    </location>
</feature>
<feature type="strand" evidence="4">
    <location>
        <begin position="1003"/>
        <end position="1008"/>
    </location>
</feature>
<feature type="helix" evidence="4">
    <location>
        <begin position="1014"/>
        <end position="1031"/>
    </location>
</feature>
<feature type="strand" evidence="4">
    <location>
        <begin position="1045"/>
        <end position="1049"/>
    </location>
</feature>
<feature type="helix" evidence="4">
    <location>
        <begin position="1054"/>
        <end position="1060"/>
    </location>
</feature>
<feature type="helix" evidence="4">
    <location>
        <begin position="1061"/>
        <end position="1064"/>
    </location>
</feature>
<feature type="turn" evidence="4">
    <location>
        <begin position="1065"/>
        <end position="1067"/>
    </location>
</feature>
<feature type="strand" evidence="4">
    <location>
        <begin position="1069"/>
        <end position="1074"/>
    </location>
</feature>
<feature type="helix" evidence="4">
    <location>
        <begin position="1075"/>
        <end position="1077"/>
    </location>
</feature>
<feature type="helix" evidence="4">
    <location>
        <begin position="1083"/>
        <end position="1094"/>
    </location>
</feature>
<feature type="strand" evidence="4">
    <location>
        <begin position="1101"/>
        <end position="1104"/>
    </location>
</feature>
<feature type="helix" evidence="4">
    <location>
        <begin position="1108"/>
        <end position="1110"/>
    </location>
</feature>
<feature type="strand" evidence="4">
    <location>
        <begin position="1112"/>
        <end position="1114"/>
    </location>
</feature>
<feature type="helix" evidence="4">
    <location>
        <begin position="1119"/>
        <end position="1131"/>
    </location>
</feature>
<feature type="strand" evidence="4">
    <location>
        <begin position="1135"/>
        <end position="1140"/>
    </location>
</feature>
<feature type="helix" evidence="4">
    <location>
        <begin position="1145"/>
        <end position="1154"/>
    </location>
</feature>
<feature type="strand" evidence="4">
    <location>
        <begin position="1159"/>
        <end position="1165"/>
    </location>
</feature>
<feature type="helix" evidence="4">
    <location>
        <begin position="1176"/>
        <end position="1187"/>
    </location>
</feature>
<feature type="strand" evidence="4">
    <location>
        <begin position="1191"/>
        <end position="1198"/>
    </location>
</feature>
<feature type="helix" evidence="4">
    <location>
        <begin position="1203"/>
        <end position="1214"/>
    </location>
</feature>
<feature type="strand" evidence="4">
    <location>
        <begin position="1220"/>
        <end position="1226"/>
    </location>
</feature>
<feature type="helix" evidence="4">
    <location>
        <begin position="1227"/>
        <end position="1229"/>
    </location>
</feature>
<feature type="helix" evidence="4">
    <location>
        <begin position="1230"/>
        <end position="1235"/>
    </location>
</feature>
<feature type="strand" evidence="4">
    <location>
        <begin position="1238"/>
        <end position="1243"/>
    </location>
</feature>
<feature type="helix" evidence="4">
    <location>
        <begin position="1256"/>
        <end position="1265"/>
    </location>
</feature>
<feature type="strand" evidence="4">
    <location>
        <begin position="1273"/>
        <end position="1280"/>
    </location>
</feature>
<feature type="helix" evidence="4">
    <location>
        <begin position="1286"/>
        <end position="1297"/>
    </location>
</feature>
<feature type="strand" evidence="4">
    <location>
        <begin position="1302"/>
        <end position="1307"/>
    </location>
</feature>
<feature type="helix" evidence="4">
    <location>
        <begin position="1311"/>
        <end position="1317"/>
    </location>
</feature>
<feature type="strand" evidence="4">
    <location>
        <begin position="1324"/>
        <end position="1329"/>
    </location>
</feature>
<feature type="helix" evidence="6">
    <location>
        <begin position="1331"/>
        <end position="1333"/>
    </location>
</feature>
<feature type="helix" evidence="4">
    <location>
        <begin position="1336"/>
        <end position="1340"/>
    </location>
</feature>
<feature type="strand" evidence="4">
    <location>
        <begin position="1342"/>
        <end position="1344"/>
    </location>
</feature>
<feature type="helix" evidence="4">
    <location>
        <begin position="1346"/>
        <end position="1351"/>
    </location>
</feature>
<feature type="strand" evidence="4">
    <location>
        <begin position="1355"/>
        <end position="1360"/>
    </location>
</feature>
<feature type="strand" evidence="4">
    <location>
        <begin position="1363"/>
        <end position="1367"/>
    </location>
</feature>
<feature type="helix" evidence="4">
    <location>
        <begin position="1370"/>
        <end position="1380"/>
    </location>
</feature>
<feature type="strand" evidence="4">
    <location>
        <begin position="1388"/>
        <end position="1395"/>
    </location>
</feature>
<feature type="helix" evidence="4">
    <location>
        <begin position="1400"/>
        <end position="1409"/>
    </location>
</feature>
<feature type="strand" evidence="4">
    <location>
        <begin position="1415"/>
        <end position="1418"/>
    </location>
</feature>
<feature type="helix" evidence="4">
    <location>
        <begin position="1422"/>
        <end position="1430"/>
    </location>
</feature>
<feature type="helix" evidence="4">
    <location>
        <begin position="1434"/>
        <end position="1436"/>
    </location>
</feature>
<feature type="strand" evidence="4">
    <location>
        <begin position="1438"/>
        <end position="1440"/>
    </location>
</feature>
<feature type="helix" evidence="4">
    <location>
        <begin position="1444"/>
        <end position="1448"/>
    </location>
</feature>
<feature type="strand" evidence="4">
    <location>
        <begin position="1452"/>
        <end position="1458"/>
    </location>
</feature>
<feature type="strand" evidence="4">
    <location>
        <begin position="1462"/>
        <end position="1464"/>
    </location>
</feature>
<feature type="helix" evidence="4">
    <location>
        <begin position="1468"/>
        <end position="1479"/>
    </location>
</feature>
<feature type="strand" evidence="4">
    <location>
        <begin position="1486"/>
        <end position="1488"/>
    </location>
</feature>
<feature type="strand" evidence="4">
    <location>
        <begin position="1491"/>
        <end position="1494"/>
    </location>
</feature>
<feature type="strand" evidence="4">
    <location>
        <begin position="1498"/>
        <end position="1501"/>
    </location>
</feature>
<feature type="helix" evidence="4">
    <location>
        <begin position="1503"/>
        <end position="1510"/>
    </location>
</feature>
<feature type="strand" evidence="4">
    <location>
        <begin position="1515"/>
        <end position="1517"/>
    </location>
</feature>
<feature type="helix" evidence="4">
    <location>
        <begin position="1519"/>
        <end position="1535"/>
    </location>
</feature>
<feature type="helix" evidence="4">
    <location>
        <begin position="1541"/>
        <end position="1549"/>
    </location>
</feature>
<keyword id="KW-0002">3D-structure</keyword>
<keyword id="KW-0028">Amino-acid biosynthesis</keyword>
<keyword id="KW-0057">Aromatic amino acid biosynthesis</keyword>
<keyword id="KW-0067">ATP-binding</keyword>
<keyword id="KW-0963">Cytoplasm</keyword>
<keyword id="KW-0418">Kinase</keyword>
<keyword id="KW-0456">Lyase</keyword>
<keyword id="KW-0479">Metal-binding</keyword>
<keyword id="KW-0511">Multifunctional enzyme</keyword>
<keyword id="KW-0521">NADP</keyword>
<keyword id="KW-0547">Nucleotide-binding</keyword>
<keyword id="KW-0560">Oxidoreductase</keyword>
<keyword id="KW-1185">Reference proteome</keyword>
<keyword id="KW-0808">Transferase</keyword>
<keyword id="KW-0862">Zinc</keyword>
<gene>
    <name evidence="1" type="primary">ARO1</name>
    <name type="ordered locus">CAALFM_C400890WA</name>
    <name type="ORF">CaO19.12175</name>
    <name type="ORF">CaO19.4704</name>
</gene>
<accession>Q5AME2</accession>
<accession>A0A1D8PL64</accession>
<accession>Q5AMU6</accession>
<protein>
    <recommendedName>
        <fullName evidence="1">Pentafunctional AROM polypeptide</fullName>
    </recommendedName>
    <domain>
        <recommendedName>
            <fullName evidence="1">3-dehydroquinate synthase</fullName>
            <shortName evidence="1">DHQS</shortName>
            <ecNumber evidence="1">4.2.3.4</ecNumber>
        </recommendedName>
    </domain>
    <domain>
        <recommendedName>
            <fullName evidence="1">3-phosphoshikimate 1-carboxyvinyltransferase</fullName>
            <ecNumber evidence="1">2.5.1.19</ecNumber>
        </recommendedName>
        <alternativeName>
            <fullName evidence="1">5-enolpyruvylshikimate-3-phosphate synthase</fullName>
            <shortName evidence="1">EPSP synthase</shortName>
            <shortName evidence="1">EPSPS</shortName>
        </alternativeName>
    </domain>
    <domain>
        <recommendedName>
            <fullName evidence="1">Shikimate kinase</fullName>
            <shortName evidence="1">SK</shortName>
            <ecNumber evidence="1">2.7.1.71</ecNumber>
        </recommendedName>
    </domain>
    <domain>
        <recommendedName>
            <fullName evidence="1">3-dehydroquinate dehydratase</fullName>
            <shortName evidence="1">3-dehydroquinase</shortName>
            <ecNumber evidence="1">4.2.1.10</ecNumber>
        </recommendedName>
    </domain>
    <domain>
        <recommendedName>
            <fullName evidence="1">Shikimate dehydrogenase</fullName>
            <ecNumber evidence="1">1.1.1.25</ecNumber>
        </recommendedName>
    </domain>
</protein>
<dbReference type="EC" id="4.2.3.4" evidence="1"/>
<dbReference type="EC" id="2.5.1.19" evidence="1"/>
<dbReference type="EC" id="2.7.1.71" evidence="1"/>
<dbReference type="EC" id="4.2.1.10" evidence="1"/>
<dbReference type="EC" id="1.1.1.25" evidence="1"/>
<dbReference type="EMBL" id="CP017626">
    <property type="protein sequence ID" value="AOW28880.1"/>
    <property type="molecule type" value="Genomic_DNA"/>
</dbReference>
<dbReference type="RefSeq" id="XP_722769.2">
    <property type="nucleotide sequence ID" value="XM_717676.2"/>
</dbReference>
<dbReference type="PDB" id="6C5C">
    <property type="method" value="X-ray"/>
    <property type="resolution" value="1.85 A"/>
    <property type="chains" value="A/B=1-387"/>
</dbReference>
<dbReference type="PDB" id="7TBU">
    <property type="method" value="X-ray"/>
    <property type="resolution" value="1.85 A"/>
    <property type="chains" value="A/B=387-844"/>
</dbReference>
<dbReference type="PDB" id="7TBV">
    <property type="method" value="X-ray"/>
    <property type="resolution" value="2.30 A"/>
    <property type="chains" value="A/B/C/D=856-1551"/>
</dbReference>
<dbReference type="PDB" id="7U5S">
    <property type="method" value="EM"/>
    <property type="resolution" value="4.16 A"/>
    <property type="chains" value="A/B=1-1551"/>
</dbReference>
<dbReference type="PDB" id="7U5T">
    <property type="method" value="EM"/>
    <property type="resolution" value="3.43 A"/>
    <property type="chains" value="A/B=1-1551"/>
</dbReference>
<dbReference type="PDB" id="7U5U">
    <property type="method" value="EM"/>
    <property type="resolution" value="3.16 A"/>
    <property type="chains" value="A/B=1-1551"/>
</dbReference>
<dbReference type="PDBsum" id="6C5C"/>
<dbReference type="PDBsum" id="7TBU"/>
<dbReference type="PDBsum" id="7TBV"/>
<dbReference type="PDBsum" id="7U5S"/>
<dbReference type="PDBsum" id="7U5T"/>
<dbReference type="PDBsum" id="7U5U"/>
<dbReference type="EMDB" id="EMD-26357"/>
<dbReference type="EMDB" id="EMD-26358"/>
<dbReference type="EMDB" id="EMD-26359"/>
<dbReference type="SMR" id="Q5AME2"/>
<dbReference type="BioGRID" id="1218632">
    <property type="interactions" value="1"/>
</dbReference>
<dbReference type="FunCoup" id="Q5AME2">
    <property type="interactions" value="513"/>
</dbReference>
<dbReference type="STRING" id="237561.Q5AME2"/>
<dbReference type="EnsemblFungi" id="C4_00890W_A-T">
    <property type="protein sequence ID" value="C4_00890W_A-T-p1"/>
    <property type="gene ID" value="C4_00890W_A"/>
</dbReference>
<dbReference type="GeneID" id="3635680"/>
<dbReference type="KEGG" id="cal:CAALFM_C400890WA"/>
<dbReference type="CGD" id="CAL0000177892">
    <property type="gene designation" value="ARO1"/>
</dbReference>
<dbReference type="VEuPathDB" id="FungiDB:C4_00890W_A"/>
<dbReference type="HOGENOM" id="CLU_001201_1_2_1"/>
<dbReference type="InParanoid" id="Q5AME2"/>
<dbReference type="OrthoDB" id="197068at2759"/>
<dbReference type="UniPathway" id="UPA00053">
    <property type="reaction ID" value="UER00085"/>
</dbReference>
<dbReference type="UniPathway" id="UPA00053">
    <property type="reaction ID" value="UER00086"/>
</dbReference>
<dbReference type="UniPathway" id="UPA00053">
    <property type="reaction ID" value="UER00087"/>
</dbReference>
<dbReference type="UniPathway" id="UPA00053">
    <property type="reaction ID" value="UER00088"/>
</dbReference>
<dbReference type="UniPathway" id="UPA00053">
    <property type="reaction ID" value="UER00089"/>
</dbReference>
<dbReference type="PHI-base" id="PHI:8154"/>
<dbReference type="PRO" id="PR:Q5AME2"/>
<dbReference type="Proteomes" id="UP000000559">
    <property type="component" value="Chromosome 4"/>
</dbReference>
<dbReference type="GO" id="GO:0005737">
    <property type="term" value="C:cytoplasm"/>
    <property type="evidence" value="ECO:0007669"/>
    <property type="project" value="UniProtKB-SubCell"/>
</dbReference>
<dbReference type="GO" id="GO:0003855">
    <property type="term" value="F:3-dehydroquinate dehydratase activity"/>
    <property type="evidence" value="ECO:0000318"/>
    <property type="project" value="GO_Central"/>
</dbReference>
<dbReference type="GO" id="GO:0003856">
    <property type="term" value="F:3-dehydroquinate synthase activity"/>
    <property type="evidence" value="ECO:0007669"/>
    <property type="project" value="UniProtKB-UniRule"/>
</dbReference>
<dbReference type="GO" id="GO:0003866">
    <property type="term" value="F:3-phosphoshikimate 1-carboxyvinyltransferase activity"/>
    <property type="evidence" value="ECO:0000318"/>
    <property type="project" value="GO_Central"/>
</dbReference>
<dbReference type="GO" id="GO:0005524">
    <property type="term" value="F:ATP binding"/>
    <property type="evidence" value="ECO:0007669"/>
    <property type="project" value="UniProtKB-UniRule"/>
</dbReference>
<dbReference type="GO" id="GO:0046872">
    <property type="term" value="F:metal ion binding"/>
    <property type="evidence" value="ECO:0007669"/>
    <property type="project" value="UniProtKB-UniRule"/>
</dbReference>
<dbReference type="GO" id="GO:0004764">
    <property type="term" value="F:shikimate 3-dehydrogenase (NADP+) activity"/>
    <property type="evidence" value="ECO:0000318"/>
    <property type="project" value="GO_Central"/>
</dbReference>
<dbReference type="GO" id="GO:0004765">
    <property type="term" value="F:shikimate kinase activity"/>
    <property type="evidence" value="ECO:0000318"/>
    <property type="project" value="GO_Central"/>
</dbReference>
<dbReference type="GO" id="GO:0008652">
    <property type="term" value="P:amino acid biosynthetic process"/>
    <property type="evidence" value="ECO:0007669"/>
    <property type="project" value="UniProtKB-KW"/>
</dbReference>
<dbReference type="GO" id="GO:0009073">
    <property type="term" value="P:aromatic amino acid family biosynthetic process"/>
    <property type="evidence" value="ECO:0000315"/>
    <property type="project" value="CGD"/>
</dbReference>
<dbReference type="GO" id="GO:0009423">
    <property type="term" value="P:chorismate biosynthetic process"/>
    <property type="evidence" value="ECO:0000318"/>
    <property type="project" value="GO_Central"/>
</dbReference>
<dbReference type="CDD" id="cd00502">
    <property type="entry name" value="DHQase_I"/>
    <property type="match status" value="1"/>
</dbReference>
<dbReference type="CDD" id="cd08195">
    <property type="entry name" value="DHQS"/>
    <property type="match status" value="1"/>
</dbReference>
<dbReference type="CDD" id="cd01556">
    <property type="entry name" value="EPSP_synthase"/>
    <property type="match status" value="1"/>
</dbReference>
<dbReference type="CDD" id="cd01065">
    <property type="entry name" value="NAD_bind_Shikimate_DH"/>
    <property type="match status" value="1"/>
</dbReference>
<dbReference type="CDD" id="cd00464">
    <property type="entry name" value="SK"/>
    <property type="match status" value="1"/>
</dbReference>
<dbReference type="FunFam" id="1.20.1090.10:FF:000007">
    <property type="entry name" value="Pentafunctional AROM polypeptide"/>
    <property type="match status" value="1"/>
</dbReference>
<dbReference type="FunFam" id="3.20.20.70:FF:000135">
    <property type="entry name" value="Pentafunctional AROM polypeptide"/>
    <property type="match status" value="1"/>
</dbReference>
<dbReference type="FunFam" id="3.40.50.1970:FF:000007">
    <property type="entry name" value="Pentafunctional AROM polypeptide"/>
    <property type="match status" value="1"/>
</dbReference>
<dbReference type="FunFam" id="3.40.50.300:FF:001256">
    <property type="entry name" value="Pentafunctional AROM polypeptide"/>
    <property type="match status" value="1"/>
</dbReference>
<dbReference type="FunFam" id="3.65.10.10:FF:000007">
    <property type="entry name" value="Pentafunctional AROM polypeptide"/>
    <property type="match status" value="1"/>
</dbReference>
<dbReference type="FunFam" id="3.65.10.10:FF:000008">
    <property type="entry name" value="Pentafunctional AROM polypeptide"/>
    <property type="match status" value="1"/>
</dbReference>
<dbReference type="Gene3D" id="3.40.50.1970">
    <property type="match status" value="1"/>
</dbReference>
<dbReference type="Gene3D" id="3.20.20.70">
    <property type="entry name" value="Aldolase class I"/>
    <property type="match status" value="1"/>
</dbReference>
<dbReference type="Gene3D" id="1.20.1090.10">
    <property type="entry name" value="Dehydroquinate synthase-like - alpha domain"/>
    <property type="match status" value="1"/>
</dbReference>
<dbReference type="Gene3D" id="3.65.10.10">
    <property type="entry name" value="Enolpyruvate transferase domain"/>
    <property type="match status" value="2"/>
</dbReference>
<dbReference type="Gene3D" id="3.40.50.10860">
    <property type="entry name" value="Leucine Dehydrogenase, chain A, domain 1"/>
    <property type="match status" value="1"/>
</dbReference>
<dbReference type="Gene3D" id="3.40.50.720">
    <property type="entry name" value="NAD(P)-binding Rossmann-like Domain"/>
    <property type="match status" value="1"/>
</dbReference>
<dbReference type="Gene3D" id="3.40.50.300">
    <property type="entry name" value="P-loop containing nucleotide triphosphate hydrolases"/>
    <property type="match status" value="1"/>
</dbReference>
<dbReference type="HAMAP" id="MF_00210">
    <property type="entry name" value="EPSP_synth"/>
    <property type="match status" value="1"/>
</dbReference>
<dbReference type="HAMAP" id="MF_03143">
    <property type="entry name" value="Pentafunct_AroM"/>
    <property type="match status" value="1"/>
</dbReference>
<dbReference type="HAMAP" id="MF_00109">
    <property type="entry name" value="Shikimate_kinase"/>
    <property type="match status" value="1"/>
</dbReference>
<dbReference type="InterPro" id="IPR013785">
    <property type="entry name" value="Aldolase_TIM"/>
</dbReference>
<dbReference type="InterPro" id="IPR046346">
    <property type="entry name" value="Aminoacid_DH-like_N_sf"/>
</dbReference>
<dbReference type="InterPro" id="IPR016037">
    <property type="entry name" value="DHQ_synth_AroB"/>
</dbReference>
<dbReference type="InterPro" id="IPR030960">
    <property type="entry name" value="DHQS/DOIS_N"/>
</dbReference>
<dbReference type="InterPro" id="IPR056179">
    <property type="entry name" value="DHQS_C"/>
</dbReference>
<dbReference type="InterPro" id="IPR001381">
    <property type="entry name" value="DHquinase_I"/>
</dbReference>
<dbReference type="InterPro" id="IPR001986">
    <property type="entry name" value="Enolpyruvate_Tfrase_dom"/>
</dbReference>
<dbReference type="InterPro" id="IPR036968">
    <property type="entry name" value="Enolpyruvate_Tfrase_sf"/>
</dbReference>
<dbReference type="InterPro" id="IPR006264">
    <property type="entry name" value="EPSP_synthase"/>
</dbReference>
<dbReference type="InterPro" id="IPR023193">
    <property type="entry name" value="EPSP_synthase_CS"/>
</dbReference>
<dbReference type="InterPro" id="IPR036291">
    <property type="entry name" value="NAD(P)-bd_dom_sf"/>
</dbReference>
<dbReference type="InterPro" id="IPR027417">
    <property type="entry name" value="P-loop_NTPase"/>
</dbReference>
<dbReference type="InterPro" id="IPR008289">
    <property type="entry name" value="Pentafunct_AroM"/>
</dbReference>
<dbReference type="InterPro" id="IPR013792">
    <property type="entry name" value="RNA3'P_cycl/enolpyr_Trfase_a/b"/>
</dbReference>
<dbReference type="InterPro" id="IPR041121">
    <property type="entry name" value="SDH_C"/>
</dbReference>
<dbReference type="InterPro" id="IPR031322">
    <property type="entry name" value="Shikimate/glucono_kinase"/>
</dbReference>
<dbReference type="InterPro" id="IPR013708">
    <property type="entry name" value="Shikimate_DH-bd_N"/>
</dbReference>
<dbReference type="InterPro" id="IPR010110">
    <property type="entry name" value="Shikimate_DH_AroM-type"/>
</dbReference>
<dbReference type="InterPro" id="IPR000623">
    <property type="entry name" value="Shikimate_kinase/TSH1"/>
</dbReference>
<dbReference type="InterPro" id="IPR006151">
    <property type="entry name" value="Shikm_DH/Glu-tRNA_Rdtase"/>
</dbReference>
<dbReference type="NCBIfam" id="TIGR01356">
    <property type="entry name" value="aroA"/>
    <property type="match status" value="1"/>
</dbReference>
<dbReference type="NCBIfam" id="TIGR01357">
    <property type="entry name" value="aroB"/>
    <property type="match status" value="1"/>
</dbReference>
<dbReference type="NCBIfam" id="TIGR01093">
    <property type="entry name" value="aroD"/>
    <property type="match status" value="1"/>
</dbReference>
<dbReference type="NCBIfam" id="TIGR01809">
    <property type="entry name" value="Shik-DH-AROM"/>
    <property type="match status" value="1"/>
</dbReference>
<dbReference type="PANTHER" id="PTHR21090">
    <property type="entry name" value="AROM/DEHYDROQUINATE SYNTHASE"/>
    <property type="match status" value="1"/>
</dbReference>
<dbReference type="PANTHER" id="PTHR21090:SF5">
    <property type="entry name" value="PENTAFUNCTIONAL AROM POLYPEPTIDE"/>
    <property type="match status" value="1"/>
</dbReference>
<dbReference type="Pfam" id="PF01761">
    <property type="entry name" value="DHQ_synthase"/>
    <property type="match status" value="1"/>
</dbReference>
<dbReference type="Pfam" id="PF24621">
    <property type="entry name" value="DHQS_C"/>
    <property type="match status" value="1"/>
</dbReference>
<dbReference type="Pfam" id="PF01487">
    <property type="entry name" value="DHquinase_I"/>
    <property type="match status" value="1"/>
</dbReference>
<dbReference type="Pfam" id="PF00275">
    <property type="entry name" value="EPSP_synthase"/>
    <property type="match status" value="1"/>
</dbReference>
<dbReference type="Pfam" id="PF18317">
    <property type="entry name" value="SDH_C"/>
    <property type="match status" value="1"/>
</dbReference>
<dbReference type="Pfam" id="PF01488">
    <property type="entry name" value="Shikimate_DH"/>
    <property type="match status" value="1"/>
</dbReference>
<dbReference type="Pfam" id="PF08501">
    <property type="entry name" value="Shikimate_dh_N"/>
    <property type="match status" value="1"/>
</dbReference>
<dbReference type="Pfam" id="PF01202">
    <property type="entry name" value="SKI"/>
    <property type="match status" value="1"/>
</dbReference>
<dbReference type="PIRSF" id="PIRSF000514">
    <property type="entry name" value="Pentafunct_AroM"/>
    <property type="match status" value="1"/>
</dbReference>
<dbReference type="PRINTS" id="PR01100">
    <property type="entry name" value="SHIKIMTKNASE"/>
</dbReference>
<dbReference type="SUPFAM" id="SSF51569">
    <property type="entry name" value="Aldolase"/>
    <property type="match status" value="1"/>
</dbReference>
<dbReference type="SUPFAM" id="SSF53223">
    <property type="entry name" value="Aminoacid dehydrogenase-like, N-terminal domain"/>
    <property type="match status" value="1"/>
</dbReference>
<dbReference type="SUPFAM" id="SSF56796">
    <property type="entry name" value="Dehydroquinate synthase-like"/>
    <property type="match status" value="1"/>
</dbReference>
<dbReference type="SUPFAM" id="SSF55205">
    <property type="entry name" value="EPT/RTPC-like"/>
    <property type="match status" value="1"/>
</dbReference>
<dbReference type="SUPFAM" id="SSF51735">
    <property type="entry name" value="NAD(P)-binding Rossmann-fold domains"/>
    <property type="match status" value="1"/>
</dbReference>
<dbReference type="SUPFAM" id="SSF52540">
    <property type="entry name" value="P-loop containing nucleoside triphosphate hydrolases"/>
    <property type="match status" value="1"/>
</dbReference>
<dbReference type="PROSITE" id="PS00104">
    <property type="entry name" value="EPSP_SYNTHASE_1"/>
    <property type="match status" value="1"/>
</dbReference>
<dbReference type="PROSITE" id="PS00885">
    <property type="entry name" value="EPSP_SYNTHASE_2"/>
    <property type="match status" value="1"/>
</dbReference>
<evidence type="ECO:0000255" key="1">
    <source>
        <dbReference type="HAMAP-Rule" id="MF_03143"/>
    </source>
</evidence>
<evidence type="ECO:0007829" key="2">
    <source>
        <dbReference type="PDB" id="6C5C"/>
    </source>
</evidence>
<evidence type="ECO:0007829" key="3">
    <source>
        <dbReference type="PDB" id="7TBU"/>
    </source>
</evidence>
<evidence type="ECO:0007829" key="4">
    <source>
        <dbReference type="PDB" id="7TBV"/>
    </source>
</evidence>
<evidence type="ECO:0007829" key="5">
    <source>
        <dbReference type="PDB" id="7U5T"/>
    </source>
</evidence>
<evidence type="ECO:0007829" key="6">
    <source>
        <dbReference type="PDB" id="7U5U"/>
    </source>
</evidence>
<comment type="function">
    <text evidence="1">The AROM polypeptide catalyzes 5 consecutive enzymatic reactions in prechorismate polyaromatic amino acid biosynthesis.</text>
</comment>
<comment type="catalytic activity">
    <reaction evidence="1">
        <text>7-phospho-2-dehydro-3-deoxy-D-arabino-heptonate = 3-dehydroquinate + phosphate</text>
        <dbReference type="Rhea" id="RHEA:21968"/>
        <dbReference type="ChEBI" id="CHEBI:32364"/>
        <dbReference type="ChEBI" id="CHEBI:43474"/>
        <dbReference type="ChEBI" id="CHEBI:58394"/>
        <dbReference type="EC" id="4.2.3.4"/>
    </reaction>
</comment>
<comment type="catalytic activity">
    <reaction evidence="1">
        <text>3-dehydroquinate = 3-dehydroshikimate + H2O</text>
        <dbReference type="Rhea" id="RHEA:21096"/>
        <dbReference type="ChEBI" id="CHEBI:15377"/>
        <dbReference type="ChEBI" id="CHEBI:16630"/>
        <dbReference type="ChEBI" id="CHEBI:32364"/>
        <dbReference type="EC" id="4.2.1.10"/>
    </reaction>
</comment>
<comment type="catalytic activity">
    <reaction evidence="1">
        <text>shikimate + NADP(+) = 3-dehydroshikimate + NADPH + H(+)</text>
        <dbReference type="Rhea" id="RHEA:17737"/>
        <dbReference type="ChEBI" id="CHEBI:15378"/>
        <dbReference type="ChEBI" id="CHEBI:16630"/>
        <dbReference type="ChEBI" id="CHEBI:36208"/>
        <dbReference type="ChEBI" id="CHEBI:57783"/>
        <dbReference type="ChEBI" id="CHEBI:58349"/>
        <dbReference type="EC" id="1.1.1.25"/>
    </reaction>
</comment>
<comment type="catalytic activity">
    <reaction evidence="1">
        <text>shikimate + ATP = 3-phosphoshikimate + ADP + H(+)</text>
        <dbReference type="Rhea" id="RHEA:13121"/>
        <dbReference type="ChEBI" id="CHEBI:15378"/>
        <dbReference type="ChEBI" id="CHEBI:30616"/>
        <dbReference type="ChEBI" id="CHEBI:36208"/>
        <dbReference type="ChEBI" id="CHEBI:145989"/>
        <dbReference type="ChEBI" id="CHEBI:456216"/>
        <dbReference type="EC" id="2.7.1.71"/>
    </reaction>
</comment>
<comment type="catalytic activity">
    <reaction evidence="1">
        <text>3-phosphoshikimate + phosphoenolpyruvate = 5-O-(1-carboxyvinyl)-3-phosphoshikimate + phosphate</text>
        <dbReference type="Rhea" id="RHEA:21256"/>
        <dbReference type="ChEBI" id="CHEBI:43474"/>
        <dbReference type="ChEBI" id="CHEBI:57701"/>
        <dbReference type="ChEBI" id="CHEBI:58702"/>
        <dbReference type="ChEBI" id="CHEBI:145989"/>
        <dbReference type="EC" id="2.5.1.19"/>
    </reaction>
</comment>
<comment type="cofactor">
    <cofactor>
        <name>Zn(2+)</name>
        <dbReference type="ChEBI" id="CHEBI:29105"/>
    </cofactor>
    <text>Binds 2 Zn(2+) ions per subunit.</text>
</comment>
<comment type="pathway">
    <text evidence="1">Metabolic intermediate biosynthesis; chorismate biosynthesis; chorismate from D-erythrose 4-phosphate and phosphoenolpyruvate: step 2/7.</text>
</comment>
<comment type="pathway">
    <text evidence="1">Metabolic intermediate biosynthesis; chorismate biosynthesis; chorismate from D-erythrose 4-phosphate and phosphoenolpyruvate: step 3/7.</text>
</comment>
<comment type="pathway">
    <text evidence="1">Metabolic intermediate biosynthesis; chorismate biosynthesis; chorismate from D-erythrose 4-phosphate and phosphoenolpyruvate: step 4/7.</text>
</comment>
<comment type="pathway">
    <text evidence="1">Metabolic intermediate biosynthesis; chorismate biosynthesis; chorismate from D-erythrose 4-phosphate and phosphoenolpyruvate: step 5/7.</text>
</comment>
<comment type="pathway">
    <text evidence="1">Metabolic intermediate biosynthesis; chorismate biosynthesis; chorismate from D-erythrose 4-phosphate and phosphoenolpyruvate: step 6/7.</text>
</comment>
<comment type="subunit">
    <text evidence="1">Homodimer.</text>
</comment>
<comment type="subcellular location">
    <subcellularLocation>
        <location evidence="1">Cytoplasm</location>
    </subcellularLocation>
</comment>
<comment type="similarity">
    <text evidence="1">In the N-terminal section; belongs to the sugar phosphate cyclases superfamily. Dehydroquinate synthase family.</text>
</comment>
<comment type="similarity">
    <text evidence="1">In the 2nd section; belongs to the EPSP synthase family.</text>
</comment>
<comment type="similarity">
    <text evidence="1">In the 3rd section; belongs to the shikimate kinase family.</text>
</comment>
<comment type="similarity">
    <text evidence="1">In the 4th section; belongs to the type-I 3-dehydroquinase family.</text>
</comment>
<comment type="similarity">
    <text evidence="1">In the C-terminal section; belongs to the shikimate dehydrogenase family.</text>
</comment>